<accession>Q2JM51</accession>
<name>RL11_SYNJB</name>
<evidence type="ECO:0000255" key="1">
    <source>
        <dbReference type="HAMAP-Rule" id="MF_00736"/>
    </source>
</evidence>
<evidence type="ECO:0000305" key="2"/>
<organism>
    <name type="scientific">Synechococcus sp. (strain JA-2-3B'a(2-13))</name>
    <name type="common">Cyanobacteria bacterium Yellowstone B-Prime</name>
    <dbReference type="NCBI Taxonomy" id="321332"/>
    <lineage>
        <taxon>Bacteria</taxon>
        <taxon>Bacillati</taxon>
        <taxon>Cyanobacteriota</taxon>
        <taxon>Cyanophyceae</taxon>
        <taxon>Synechococcales</taxon>
        <taxon>Synechococcaceae</taxon>
        <taxon>Synechococcus</taxon>
    </lineage>
</organism>
<feature type="chain" id="PRO_0000258230" description="Large ribosomal subunit protein uL11">
    <location>
        <begin position="1"/>
        <end position="141"/>
    </location>
</feature>
<dbReference type="EMBL" id="CP000240">
    <property type="protein sequence ID" value="ABD02196.1"/>
    <property type="molecule type" value="Genomic_DNA"/>
</dbReference>
<dbReference type="RefSeq" id="WP_011432849.1">
    <property type="nucleotide sequence ID" value="NC_007776.1"/>
</dbReference>
<dbReference type="SMR" id="Q2JM51"/>
<dbReference type="STRING" id="321332.CYB_1221"/>
<dbReference type="KEGG" id="cyb:CYB_1221"/>
<dbReference type="eggNOG" id="COG0080">
    <property type="taxonomic scope" value="Bacteria"/>
</dbReference>
<dbReference type="HOGENOM" id="CLU_074237_2_1_3"/>
<dbReference type="OrthoDB" id="9802408at2"/>
<dbReference type="Proteomes" id="UP000001938">
    <property type="component" value="Chromosome"/>
</dbReference>
<dbReference type="GO" id="GO:0022625">
    <property type="term" value="C:cytosolic large ribosomal subunit"/>
    <property type="evidence" value="ECO:0007669"/>
    <property type="project" value="TreeGrafter"/>
</dbReference>
<dbReference type="GO" id="GO:0070180">
    <property type="term" value="F:large ribosomal subunit rRNA binding"/>
    <property type="evidence" value="ECO:0007669"/>
    <property type="project" value="UniProtKB-UniRule"/>
</dbReference>
<dbReference type="GO" id="GO:0003735">
    <property type="term" value="F:structural constituent of ribosome"/>
    <property type="evidence" value="ECO:0007669"/>
    <property type="project" value="InterPro"/>
</dbReference>
<dbReference type="GO" id="GO:0006412">
    <property type="term" value="P:translation"/>
    <property type="evidence" value="ECO:0007669"/>
    <property type="project" value="UniProtKB-UniRule"/>
</dbReference>
<dbReference type="CDD" id="cd00349">
    <property type="entry name" value="Ribosomal_L11"/>
    <property type="match status" value="1"/>
</dbReference>
<dbReference type="FunFam" id="1.10.10.250:FF:000001">
    <property type="entry name" value="50S ribosomal protein L11"/>
    <property type="match status" value="1"/>
</dbReference>
<dbReference type="FunFam" id="3.30.1550.10:FF:000001">
    <property type="entry name" value="50S ribosomal protein L11"/>
    <property type="match status" value="1"/>
</dbReference>
<dbReference type="Gene3D" id="1.10.10.250">
    <property type="entry name" value="Ribosomal protein L11, C-terminal domain"/>
    <property type="match status" value="1"/>
</dbReference>
<dbReference type="Gene3D" id="3.30.1550.10">
    <property type="entry name" value="Ribosomal protein L11/L12, N-terminal domain"/>
    <property type="match status" value="1"/>
</dbReference>
<dbReference type="HAMAP" id="MF_00736">
    <property type="entry name" value="Ribosomal_uL11"/>
    <property type="match status" value="1"/>
</dbReference>
<dbReference type="InterPro" id="IPR000911">
    <property type="entry name" value="Ribosomal_uL11"/>
</dbReference>
<dbReference type="InterPro" id="IPR006519">
    <property type="entry name" value="Ribosomal_uL11_bac-typ"/>
</dbReference>
<dbReference type="InterPro" id="IPR020783">
    <property type="entry name" value="Ribosomal_uL11_C"/>
</dbReference>
<dbReference type="InterPro" id="IPR036769">
    <property type="entry name" value="Ribosomal_uL11_C_sf"/>
</dbReference>
<dbReference type="InterPro" id="IPR020785">
    <property type="entry name" value="Ribosomal_uL11_CS"/>
</dbReference>
<dbReference type="InterPro" id="IPR020784">
    <property type="entry name" value="Ribosomal_uL11_N"/>
</dbReference>
<dbReference type="InterPro" id="IPR036796">
    <property type="entry name" value="Ribosomal_uL11_N_sf"/>
</dbReference>
<dbReference type="NCBIfam" id="TIGR01632">
    <property type="entry name" value="L11_bact"/>
    <property type="match status" value="1"/>
</dbReference>
<dbReference type="PANTHER" id="PTHR11661">
    <property type="entry name" value="60S RIBOSOMAL PROTEIN L12"/>
    <property type="match status" value="1"/>
</dbReference>
<dbReference type="PANTHER" id="PTHR11661:SF1">
    <property type="entry name" value="LARGE RIBOSOMAL SUBUNIT PROTEIN UL11M"/>
    <property type="match status" value="1"/>
</dbReference>
<dbReference type="Pfam" id="PF00298">
    <property type="entry name" value="Ribosomal_L11"/>
    <property type="match status" value="1"/>
</dbReference>
<dbReference type="Pfam" id="PF03946">
    <property type="entry name" value="Ribosomal_L11_N"/>
    <property type="match status" value="1"/>
</dbReference>
<dbReference type="SMART" id="SM00649">
    <property type="entry name" value="RL11"/>
    <property type="match status" value="1"/>
</dbReference>
<dbReference type="SUPFAM" id="SSF54747">
    <property type="entry name" value="Ribosomal L11/L12e N-terminal domain"/>
    <property type="match status" value="1"/>
</dbReference>
<dbReference type="SUPFAM" id="SSF46906">
    <property type="entry name" value="Ribosomal protein L11, C-terminal domain"/>
    <property type="match status" value="1"/>
</dbReference>
<dbReference type="PROSITE" id="PS00359">
    <property type="entry name" value="RIBOSOMAL_L11"/>
    <property type="match status" value="1"/>
</dbReference>
<comment type="function">
    <text evidence="1">Forms part of the ribosomal stalk which helps the ribosome interact with GTP-bound translation factors.</text>
</comment>
<comment type="subunit">
    <text evidence="1">Part of the ribosomal stalk of the 50S ribosomal subunit. Interacts with L10 and the large rRNA to form the base of the stalk. L10 forms an elongated spine to which L12 dimers bind in a sequential fashion forming a multimeric L10(L12)X complex.</text>
</comment>
<comment type="PTM">
    <text evidence="1">One or more lysine residues are methylated.</text>
</comment>
<comment type="similarity">
    <text evidence="1">Belongs to the universal ribosomal protein uL11 family.</text>
</comment>
<reference key="1">
    <citation type="journal article" date="2007" name="ISME J.">
        <title>Population level functional diversity in a microbial community revealed by comparative genomic and metagenomic analyses.</title>
        <authorList>
            <person name="Bhaya D."/>
            <person name="Grossman A.R."/>
            <person name="Steunou A.-S."/>
            <person name="Khuri N."/>
            <person name="Cohan F.M."/>
            <person name="Hamamura N."/>
            <person name="Melendrez M.C."/>
            <person name="Bateson M.M."/>
            <person name="Ward D.M."/>
            <person name="Heidelberg J.F."/>
        </authorList>
    </citation>
    <scope>NUCLEOTIDE SEQUENCE [LARGE SCALE GENOMIC DNA]</scope>
    <source>
        <strain>JA-2-3B'a(2-13)</strain>
    </source>
</reference>
<sequence length="141" mass="14844">MAKKLVAVVKLAIQAGKATPAPPIGPALGQHGVNIMAFCKEYNAKTADQAGMVVPVEISIFEDRSFTFVLKTPPASVLIKKALGIESGSSEPHKTKVGSLTRAQLRQIAEQKLPDLNAHDVEAAMKIIAGTARSMGVTVVD</sequence>
<proteinExistence type="inferred from homology"/>
<gene>
    <name evidence="1" type="primary">rplK</name>
    <name evidence="1" type="synonym">rpl11</name>
    <name type="ordered locus">CYB_1221</name>
</gene>
<keyword id="KW-0488">Methylation</keyword>
<keyword id="KW-1185">Reference proteome</keyword>
<keyword id="KW-0687">Ribonucleoprotein</keyword>
<keyword id="KW-0689">Ribosomal protein</keyword>
<keyword id="KW-0694">RNA-binding</keyword>
<keyword id="KW-0699">rRNA-binding</keyword>
<protein>
    <recommendedName>
        <fullName evidence="1">Large ribosomal subunit protein uL11</fullName>
    </recommendedName>
    <alternativeName>
        <fullName evidence="2">50S ribosomal protein L11</fullName>
    </alternativeName>
</protein>